<name>SYR_RENSM</name>
<protein>
    <recommendedName>
        <fullName evidence="1">Arginine--tRNA ligase</fullName>
        <ecNumber evidence="1">6.1.1.19</ecNumber>
    </recommendedName>
    <alternativeName>
        <fullName evidence="1">Arginyl-tRNA synthetase</fullName>
        <shortName evidence="1">ArgRS</shortName>
    </alternativeName>
</protein>
<reference key="1">
    <citation type="journal article" date="2008" name="J. Bacteriol.">
        <title>Genome sequence of the fish pathogen Renibacterium salmoninarum suggests reductive evolution away from an environmental Arthrobacter ancestor.</title>
        <authorList>
            <person name="Wiens G.D."/>
            <person name="Rockey D.D."/>
            <person name="Wu Z."/>
            <person name="Chang J."/>
            <person name="Levy R."/>
            <person name="Crane S."/>
            <person name="Chen D.S."/>
            <person name="Capri G.R."/>
            <person name="Burnett J.R."/>
            <person name="Sudheesh P.S."/>
            <person name="Schipma M.J."/>
            <person name="Burd H."/>
            <person name="Bhattacharyya A."/>
            <person name="Rhodes L.D."/>
            <person name="Kaul R."/>
            <person name="Strom M.S."/>
        </authorList>
    </citation>
    <scope>NUCLEOTIDE SEQUENCE [LARGE SCALE GENOMIC DNA]</scope>
    <source>
        <strain>ATCC 33209 / DSM 20767 / JCM 11484 / NBRC 15589 / NCIMB 2235</strain>
    </source>
</reference>
<feature type="chain" id="PRO_1000076225" description="Arginine--tRNA ligase">
    <location>
        <begin position="1"/>
        <end position="549"/>
    </location>
</feature>
<feature type="short sequence motif" description="'HIGH' region">
    <location>
        <begin position="132"/>
        <end position="142"/>
    </location>
</feature>
<evidence type="ECO:0000255" key="1">
    <source>
        <dbReference type="HAMAP-Rule" id="MF_00123"/>
    </source>
</evidence>
<organism>
    <name type="scientific">Renibacterium salmoninarum (strain ATCC 33209 / DSM 20767 / JCM 11484 / NBRC 15589 / NCIMB 2235)</name>
    <dbReference type="NCBI Taxonomy" id="288705"/>
    <lineage>
        <taxon>Bacteria</taxon>
        <taxon>Bacillati</taxon>
        <taxon>Actinomycetota</taxon>
        <taxon>Actinomycetes</taxon>
        <taxon>Micrococcales</taxon>
        <taxon>Micrococcaceae</taxon>
        <taxon>Renibacterium</taxon>
    </lineage>
</organism>
<proteinExistence type="inferred from homology"/>
<dbReference type="EC" id="6.1.1.19" evidence="1"/>
<dbReference type="EMBL" id="CP000910">
    <property type="protein sequence ID" value="ABY23163.1"/>
    <property type="molecule type" value="Genomic_DNA"/>
</dbReference>
<dbReference type="RefSeq" id="WP_012244844.1">
    <property type="nucleotide sequence ID" value="NC_010168.1"/>
</dbReference>
<dbReference type="SMR" id="A9WNA7"/>
<dbReference type="STRING" id="288705.RSal33209_1427"/>
<dbReference type="KEGG" id="rsa:RSal33209_1427"/>
<dbReference type="eggNOG" id="COG0018">
    <property type="taxonomic scope" value="Bacteria"/>
</dbReference>
<dbReference type="HOGENOM" id="CLU_006406_0_1_11"/>
<dbReference type="Proteomes" id="UP000002007">
    <property type="component" value="Chromosome"/>
</dbReference>
<dbReference type="GO" id="GO:0005737">
    <property type="term" value="C:cytoplasm"/>
    <property type="evidence" value="ECO:0007669"/>
    <property type="project" value="UniProtKB-SubCell"/>
</dbReference>
<dbReference type="GO" id="GO:0004814">
    <property type="term" value="F:arginine-tRNA ligase activity"/>
    <property type="evidence" value="ECO:0007669"/>
    <property type="project" value="UniProtKB-UniRule"/>
</dbReference>
<dbReference type="GO" id="GO:0005524">
    <property type="term" value="F:ATP binding"/>
    <property type="evidence" value="ECO:0007669"/>
    <property type="project" value="UniProtKB-UniRule"/>
</dbReference>
<dbReference type="GO" id="GO:0006420">
    <property type="term" value="P:arginyl-tRNA aminoacylation"/>
    <property type="evidence" value="ECO:0007669"/>
    <property type="project" value="UniProtKB-UniRule"/>
</dbReference>
<dbReference type="CDD" id="cd00671">
    <property type="entry name" value="ArgRS_core"/>
    <property type="match status" value="1"/>
</dbReference>
<dbReference type="FunFam" id="1.10.730.10:FF:000008">
    <property type="entry name" value="Arginine--tRNA ligase"/>
    <property type="match status" value="1"/>
</dbReference>
<dbReference type="Gene3D" id="3.30.1360.70">
    <property type="entry name" value="Arginyl tRNA synthetase N-terminal domain"/>
    <property type="match status" value="1"/>
</dbReference>
<dbReference type="Gene3D" id="3.40.50.620">
    <property type="entry name" value="HUPs"/>
    <property type="match status" value="1"/>
</dbReference>
<dbReference type="Gene3D" id="1.10.730.10">
    <property type="entry name" value="Isoleucyl-tRNA Synthetase, Domain 1"/>
    <property type="match status" value="1"/>
</dbReference>
<dbReference type="HAMAP" id="MF_00123">
    <property type="entry name" value="Arg_tRNA_synth"/>
    <property type="match status" value="1"/>
</dbReference>
<dbReference type="InterPro" id="IPR001278">
    <property type="entry name" value="Arg-tRNA-ligase"/>
</dbReference>
<dbReference type="InterPro" id="IPR005148">
    <property type="entry name" value="Arg-tRNA-synth_N"/>
</dbReference>
<dbReference type="InterPro" id="IPR036695">
    <property type="entry name" value="Arg-tRNA-synth_N_sf"/>
</dbReference>
<dbReference type="InterPro" id="IPR035684">
    <property type="entry name" value="ArgRS_core"/>
</dbReference>
<dbReference type="InterPro" id="IPR008909">
    <property type="entry name" value="DALR_anticod-bd"/>
</dbReference>
<dbReference type="InterPro" id="IPR014729">
    <property type="entry name" value="Rossmann-like_a/b/a_fold"/>
</dbReference>
<dbReference type="InterPro" id="IPR009080">
    <property type="entry name" value="tRNAsynth_Ia_anticodon-bd"/>
</dbReference>
<dbReference type="NCBIfam" id="TIGR00456">
    <property type="entry name" value="argS"/>
    <property type="match status" value="1"/>
</dbReference>
<dbReference type="PANTHER" id="PTHR11956:SF5">
    <property type="entry name" value="ARGININE--TRNA LIGASE, CYTOPLASMIC"/>
    <property type="match status" value="1"/>
</dbReference>
<dbReference type="PANTHER" id="PTHR11956">
    <property type="entry name" value="ARGINYL-TRNA SYNTHETASE"/>
    <property type="match status" value="1"/>
</dbReference>
<dbReference type="Pfam" id="PF03485">
    <property type="entry name" value="Arg_tRNA_synt_N"/>
    <property type="match status" value="1"/>
</dbReference>
<dbReference type="Pfam" id="PF05746">
    <property type="entry name" value="DALR_1"/>
    <property type="match status" value="1"/>
</dbReference>
<dbReference type="Pfam" id="PF00750">
    <property type="entry name" value="tRNA-synt_1d"/>
    <property type="match status" value="2"/>
</dbReference>
<dbReference type="PRINTS" id="PR01038">
    <property type="entry name" value="TRNASYNTHARG"/>
</dbReference>
<dbReference type="SMART" id="SM01016">
    <property type="entry name" value="Arg_tRNA_synt_N"/>
    <property type="match status" value="1"/>
</dbReference>
<dbReference type="SMART" id="SM00836">
    <property type="entry name" value="DALR_1"/>
    <property type="match status" value="1"/>
</dbReference>
<dbReference type="SUPFAM" id="SSF47323">
    <property type="entry name" value="Anticodon-binding domain of a subclass of class I aminoacyl-tRNA synthetases"/>
    <property type="match status" value="1"/>
</dbReference>
<dbReference type="SUPFAM" id="SSF55190">
    <property type="entry name" value="Arginyl-tRNA synthetase (ArgRS), N-terminal 'additional' domain"/>
    <property type="match status" value="1"/>
</dbReference>
<dbReference type="SUPFAM" id="SSF52374">
    <property type="entry name" value="Nucleotidylyl transferase"/>
    <property type="match status" value="1"/>
</dbReference>
<gene>
    <name evidence="1" type="primary">argS</name>
    <name type="ordered locus">RSal33209_1427</name>
</gene>
<comment type="catalytic activity">
    <reaction evidence="1">
        <text>tRNA(Arg) + L-arginine + ATP = L-arginyl-tRNA(Arg) + AMP + diphosphate</text>
        <dbReference type="Rhea" id="RHEA:20301"/>
        <dbReference type="Rhea" id="RHEA-COMP:9658"/>
        <dbReference type="Rhea" id="RHEA-COMP:9673"/>
        <dbReference type="ChEBI" id="CHEBI:30616"/>
        <dbReference type="ChEBI" id="CHEBI:32682"/>
        <dbReference type="ChEBI" id="CHEBI:33019"/>
        <dbReference type="ChEBI" id="CHEBI:78442"/>
        <dbReference type="ChEBI" id="CHEBI:78513"/>
        <dbReference type="ChEBI" id="CHEBI:456215"/>
        <dbReference type="EC" id="6.1.1.19"/>
    </reaction>
</comment>
<comment type="subunit">
    <text evidence="1">Monomer.</text>
</comment>
<comment type="subcellular location">
    <subcellularLocation>
        <location evidence="1">Cytoplasm</location>
    </subcellularLocation>
</comment>
<comment type="similarity">
    <text evidence="1">Belongs to the class-I aminoacyl-tRNA synthetase family.</text>
</comment>
<keyword id="KW-0030">Aminoacyl-tRNA synthetase</keyword>
<keyword id="KW-0067">ATP-binding</keyword>
<keyword id="KW-0963">Cytoplasm</keyword>
<keyword id="KW-0436">Ligase</keyword>
<keyword id="KW-0547">Nucleotide-binding</keyword>
<keyword id="KW-0648">Protein biosynthesis</keyword>
<keyword id="KW-1185">Reference proteome</keyword>
<accession>A9WNA7</accession>
<sequence>MTPDELSVALTACLKAAVEAGELVVPTEAVPAEVRVERPKNRDHGDWATNIALQLAKPAGLNPRAVAEILKSRLEAIEGVAAVDIAGPGFLNITLDAAAAGALAKNIVHAGSQYGENQALTGQVINVEFVSANPTGPLHLAHTRWAAVGDSVARLLKASGATVTSEYYINDAGSQMNNFGASVLAAIKGEPTPEGGYPGAYITELAQQVVRDHPYVTELTDEAALPVVRAAAYLAQLADIKETLNDFGVHFDVFFSEQELHSTGAVEKAVDRLRGQGHVFYQDGAIWLRTTDFTDDKDRVLIRANGEPTYFAADAAYYLSKKDRGFVEKIYLLGADHHGYIGRLKAIAACAGDDPARNIEVLIGQMVSVNGARLSKRAGNIVELRDLLNWLGADALRYSLGRSPADSPLALEPEQLQKASNDNPVFYVQYAHARTKAVDRNAEAAGVDRSAFEASLLTHPTESNLLAQLGAFPSVVAEAAKFREPHRVARHLEVVAGTYHRWYDACRVTPFAGEEITDLNRTRLWLNDATGQVLANGLDLLGVSAPERM</sequence>